<keyword id="KW-0158">Chromosome</keyword>
<keyword id="KW-0217">Developmental protein</keyword>
<keyword id="KW-0221">Differentiation</keyword>
<keyword id="KW-0226">DNA condensation</keyword>
<keyword id="KW-0238">DNA-binding</keyword>
<keyword id="KW-0544">Nucleosome core</keyword>
<keyword id="KW-0539">Nucleus</keyword>
<keyword id="KW-0744">Spermatogenesis</keyword>
<name>HSP1_SETBR</name>
<reference key="1">
    <citation type="journal article" date="2000" name="J. Mammal. Evol.">
        <title>Intergeneric relationships among Macropodoidea (Metatheria: Diprotodontia) and the chronicle of kangaroo evolution.</title>
        <authorList>
            <person name="Burk A."/>
            <person name="Springer M.S."/>
        </authorList>
    </citation>
    <scope>NUCLEOTIDE SEQUENCE [GENOMIC DNA]</scope>
</reference>
<protein>
    <recommendedName>
        <fullName>Sperm protamine P1</fullName>
    </recommendedName>
</protein>
<evidence type="ECO:0000256" key="1">
    <source>
        <dbReference type="SAM" id="MobiDB-lite"/>
    </source>
</evidence>
<evidence type="ECO:0000305" key="2"/>
<sequence length="61" mass="8546">MARYRHSRSRSRSRYRRRRRRRSRYRSRRRRYRGRRRRRSRRGRRRGYSRRRYSRRRRRRY</sequence>
<proteinExistence type="evidence at transcript level"/>
<dbReference type="EMBL" id="AF187541">
    <property type="protein sequence ID" value="AAG27958.1"/>
    <property type="molecule type" value="Genomic_DNA"/>
</dbReference>
<dbReference type="GO" id="GO:0000786">
    <property type="term" value="C:nucleosome"/>
    <property type="evidence" value="ECO:0007669"/>
    <property type="project" value="UniProtKB-KW"/>
</dbReference>
<dbReference type="GO" id="GO:0005634">
    <property type="term" value="C:nucleus"/>
    <property type="evidence" value="ECO:0007669"/>
    <property type="project" value="UniProtKB-SubCell"/>
</dbReference>
<dbReference type="GO" id="GO:0003677">
    <property type="term" value="F:DNA binding"/>
    <property type="evidence" value="ECO:0007669"/>
    <property type="project" value="UniProtKB-KW"/>
</dbReference>
<dbReference type="GO" id="GO:0030261">
    <property type="term" value="P:chromosome condensation"/>
    <property type="evidence" value="ECO:0007669"/>
    <property type="project" value="UniProtKB-KW"/>
</dbReference>
<dbReference type="GO" id="GO:0035092">
    <property type="term" value="P:sperm DNA condensation"/>
    <property type="evidence" value="ECO:0007669"/>
    <property type="project" value="InterPro"/>
</dbReference>
<dbReference type="InterPro" id="IPR000221">
    <property type="entry name" value="Protamine_P1"/>
</dbReference>
<dbReference type="PROSITE" id="PS00048">
    <property type="entry name" value="PROTAMINE_P1"/>
    <property type="match status" value="1"/>
</dbReference>
<accession>P67840</accession>
<accession>Q9GJQ1</accession>
<feature type="chain" id="PRO_0000191556" description="Sperm protamine P1">
    <location>
        <begin position="1"/>
        <end position="61"/>
    </location>
</feature>
<feature type="region of interest" description="Disordered" evidence="1">
    <location>
        <begin position="1"/>
        <end position="61"/>
    </location>
</feature>
<comment type="function">
    <text>Protamines substitute for histones in the chromatin of sperm during the haploid phase of spermatogenesis. They compact sperm DNA into a highly condensed, stable and inactive complex.</text>
</comment>
<comment type="subcellular location">
    <subcellularLocation>
        <location>Nucleus</location>
    </subcellularLocation>
    <subcellularLocation>
        <location>Chromosome</location>
    </subcellularLocation>
</comment>
<comment type="tissue specificity">
    <text>Testis.</text>
</comment>
<comment type="similarity">
    <text evidence="2">Belongs to the protamine P1 family.</text>
</comment>
<gene>
    <name type="primary">PRM1</name>
</gene>
<organism>
    <name type="scientific">Setonix brachyurus</name>
    <name type="common">Quokka</name>
    <name type="synonym">Kangurus brachyurus</name>
    <dbReference type="NCBI Taxonomy" id="30670"/>
    <lineage>
        <taxon>Eukaryota</taxon>
        <taxon>Metazoa</taxon>
        <taxon>Chordata</taxon>
        <taxon>Craniata</taxon>
        <taxon>Vertebrata</taxon>
        <taxon>Euteleostomi</taxon>
        <taxon>Mammalia</taxon>
        <taxon>Metatheria</taxon>
        <taxon>Diprotodontia</taxon>
        <taxon>Macropodidae</taxon>
        <taxon>Setonix</taxon>
    </lineage>
</organism>